<feature type="chain" id="PRO_1000148071" description="Septation ring formation regulator EzrA">
    <location>
        <begin position="1"/>
        <end position="574"/>
    </location>
</feature>
<feature type="topological domain" description="Extracellular" evidence="1">
    <location>
        <begin position="1"/>
        <end position="7"/>
    </location>
</feature>
<feature type="transmembrane region" description="Helical" evidence="1">
    <location>
        <begin position="8"/>
        <end position="26"/>
    </location>
</feature>
<feature type="topological domain" description="Cytoplasmic" evidence="1">
    <location>
        <begin position="27"/>
        <end position="574"/>
    </location>
</feature>
<feature type="coiled-coil region" evidence="1">
    <location>
        <begin position="102"/>
        <end position="131"/>
    </location>
</feature>
<feature type="coiled-coil region" evidence="1">
    <location>
        <begin position="161"/>
        <end position="190"/>
    </location>
</feature>
<feature type="coiled-coil region" evidence="1">
    <location>
        <begin position="276"/>
        <end position="379"/>
    </location>
</feature>
<feature type="coiled-coil region" evidence="1">
    <location>
        <begin position="459"/>
        <end position="493"/>
    </location>
</feature>
<evidence type="ECO:0000255" key="1">
    <source>
        <dbReference type="HAMAP-Rule" id="MF_00728"/>
    </source>
</evidence>
<reference key="1">
    <citation type="journal article" date="2009" name="PLoS Pathog.">
        <title>Genomic evidence for the evolution of Streptococcus equi: host restriction, increased virulence, and genetic exchange with human pathogens.</title>
        <authorList>
            <person name="Holden M.T.G."/>
            <person name="Heather Z."/>
            <person name="Paillot R."/>
            <person name="Steward K.F."/>
            <person name="Webb K."/>
            <person name="Ainslie F."/>
            <person name="Jourdan T."/>
            <person name="Bason N.C."/>
            <person name="Holroyd N.E."/>
            <person name="Mungall K."/>
            <person name="Quail M.A."/>
            <person name="Sanders M."/>
            <person name="Simmonds M."/>
            <person name="Willey D."/>
            <person name="Brooks K."/>
            <person name="Aanensen D.M."/>
            <person name="Spratt B.G."/>
            <person name="Jolley K.A."/>
            <person name="Maiden M.C.J."/>
            <person name="Kehoe M."/>
            <person name="Chanter N."/>
            <person name="Bentley S.D."/>
            <person name="Robinson C."/>
            <person name="Maskell D.J."/>
            <person name="Parkhill J."/>
            <person name="Waller A.S."/>
        </authorList>
    </citation>
    <scope>NUCLEOTIDE SEQUENCE [LARGE SCALE GENOMIC DNA]</scope>
    <source>
        <strain>4047</strain>
    </source>
</reference>
<keyword id="KW-0131">Cell cycle</keyword>
<keyword id="KW-0132">Cell division</keyword>
<keyword id="KW-1003">Cell membrane</keyword>
<keyword id="KW-0175">Coiled coil</keyword>
<keyword id="KW-0472">Membrane</keyword>
<keyword id="KW-0717">Septation</keyword>
<keyword id="KW-0812">Transmembrane</keyword>
<keyword id="KW-1133">Transmembrane helix</keyword>
<proteinExistence type="inferred from homology"/>
<dbReference type="EMBL" id="FM204883">
    <property type="protein sequence ID" value="CAW93395.1"/>
    <property type="molecule type" value="Genomic_DNA"/>
</dbReference>
<dbReference type="RefSeq" id="WP_012678128.1">
    <property type="nucleotide sequence ID" value="NC_012471.1"/>
</dbReference>
<dbReference type="SMR" id="C0M6K2"/>
<dbReference type="GeneID" id="83704654"/>
<dbReference type="KEGG" id="seu:SEQ_0895"/>
<dbReference type="HOGENOM" id="CLU_034079_2_0_9"/>
<dbReference type="OrthoDB" id="1654473at2"/>
<dbReference type="Proteomes" id="UP000001365">
    <property type="component" value="Chromosome"/>
</dbReference>
<dbReference type="GO" id="GO:0005886">
    <property type="term" value="C:plasma membrane"/>
    <property type="evidence" value="ECO:0007669"/>
    <property type="project" value="UniProtKB-SubCell"/>
</dbReference>
<dbReference type="GO" id="GO:0005940">
    <property type="term" value="C:septin ring"/>
    <property type="evidence" value="ECO:0007669"/>
    <property type="project" value="InterPro"/>
</dbReference>
<dbReference type="GO" id="GO:0000917">
    <property type="term" value="P:division septum assembly"/>
    <property type="evidence" value="ECO:0007669"/>
    <property type="project" value="UniProtKB-KW"/>
</dbReference>
<dbReference type="GO" id="GO:0000921">
    <property type="term" value="P:septin ring assembly"/>
    <property type="evidence" value="ECO:0007669"/>
    <property type="project" value="InterPro"/>
</dbReference>
<dbReference type="HAMAP" id="MF_00728">
    <property type="entry name" value="EzrA"/>
    <property type="match status" value="1"/>
</dbReference>
<dbReference type="InterPro" id="IPR010379">
    <property type="entry name" value="EzrA"/>
</dbReference>
<dbReference type="NCBIfam" id="NF003407">
    <property type="entry name" value="PRK04778.1-1"/>
    <property type="match status" value="1"/>
</dbReference>
<dbReference type="NCBIfam" id="NF003410">
    <property type="entry name" value="PRK04778.1-4"/>
    <property type="match status" value="1"/>
</dbReference>
<dbReference type="Pfam" id="PF06160">
    <property type="entry name" value="EzrA"/>
    <property type="match status" value="1"/>
</dbReference>
<gene>
    <name evidence="1" type="primary">ezrA</name>
    <name type="ordered locus">SEQ_0895</name>
</gene>
<accession>C0M6K2</accession>
<organism>
    <name type="scientific">Streptococcus equi subsp. equi (strain 4047)</name>
    <dbReference type="NCBI Taxonomy" id="553482"/>
    <lineage>
        <taxon>Bacteria</taxon>
        <taxon>Bacillati</taxon>
        <taxon>Bacillota</taxon>
        <taxon>Bacilli</taxon>
        <taxon>Lactobacillales</taxon>
        <taxon>Streptococcaceae</taxon>
        <taxon>Streptococcus</taxon>
    </lineage>
</organism>
<sequence>MSSGIILLIVAIVLLVIIAYLVGVIIRKRNDTLITSLEERKQALFGLPVNDEIEEVKSLHLIGQSQTSFREWNQKWVDLTLNTFTDIEKHIFEAEHLNDTFNFIRAKHEINSVESQLNLVEEDITAIREALGILKEQEEKNSARVTHALDLYEKLQASVAENEDNFGSTMAEIEKQMKNIEAEFSQFVALNSSGDPVEAAEVLDKAEEHTIALGQITEQIPAIVAKLEDDFPDQLDDLETGYRRLLEENYHFPEKNIEARFQEIRESIRANSSELVTLDLDRARDENTHIQERIDSLYELFEREIAAYKVVAKNSKILPRYLAHAKHNNEQLKHEIARLSRKYILSENEGLNIKAFDKDLKDIEDNVLEIAEAFDQQEKPFSELQLILDRSIKTLASVESGQMDVFAAVKDIEKIESQARQHLEIYVTQLHMIKRYMEKRNLPGIPQDFLSTFFTTSSQLEALMDELSRGRINIEAVSRLSEVATAAIANLEELTYQVVQHATLTEQLLQYSNRYRSFEAGVQNSFEHALKLFEVDNDYQASFDEISYALETVEPGVTERFVNSYEKTRERIRF</sequence>
<protein>
    <recommendedName>
        <fullName evidence="1">Septation ring formation regulator EzrA</fullName>
    </recommendedName>
</protein>
<name>EZRA_STRE4</name>
<comment type="function">
    <text evidence="1">Negative regulator of FtsZ ring formation; modulates the frequency and position of FtsZ ring formation. Inhibits FtsZ ring formation at polar sites. Interacts either with FtsZ or with one of its binding partners to promote depolymerization.</text>
</comment>
<comment type="subcellular location">
    <subcellularLocation>
        <location evidence="1">Cell membrane</location>
        <topology evidence="1">Single-pass membrane protein</topology>
    </subcellularLocation>
    <text evidence="1">Colocalized with FtsZ to the nascent septal site.</text>
</comment>
<comment type="similarity">
    <text evidence="1">Belongs to the EzrA family.</text>
</comment>